<reference key="1">
    <citation type="journal article" date="2003" name="Genome Res.">
        <title>Tropheryma whipplei twist: a human pathogenic Actinobacteria with a reduced genome.</title>
        <authorList>
            <person name="Raoult D."/>
            <person name="Ogata H."/>
            <person name="Audic S."/>
            <person name="Robert C."/>
            <person name="Suhre K."/>
            <person name="Drancourt M."/>
            <person name="Claverie J.-M."/>
        </authorList>
    </citation>
    <scope>NUCLEOTIDE SEQUENCE [LARGE SCALE GENOMIC DNA]</scope>
    <source>
        <strain>Twist</strain>
    </source>
</reference>
<proteinExistence type="inferred from homology"/>
<name>PDXT_TROWT</name>
<organism>
    <name type="scientific">Tropheryma whipplei (strain Twist)</name>
    <name type="common">Whipple's bacillus</name>
    <dbReference type="NCBI Taxonomy" id="203267"/>
    <lineage>
        <taxon>Bacteria</taxon>
        <taxon>Bacillati</taxon>
        <taxon>Actinomycetota</taxon>
        <taxon>Actinomycetes</taxon>
        <taxon>Micrococcales</taxon>
        <taxon>Tropherymataceae</taxon>
        <taxon>Tropheryma</taxon>
    </lineage>
</organism>
<gene>
    <name evidence="1" type="primary">pdxT</name>
    <name type="ordered locus">TWT_265</name>
</gene>
<evidence type="ECO:0000255" key="1">
    <source>
        <dbReference type="HAMAP-Rule" id="MF_01615"/>
    </source>
</evidence>
<feature type="chain" id="PRO_0000135674" description="Pyridoxal 5'-phosphate synthase subunit PdxT">
    <location>
        <begin position="1"/>
        <end position="188"/>
    </location>
</feature>
<feature type="active site" description="Nucleophile" evidence="1">
    <location>
        <position position="78"/>
    </location>
</feature>
<feature type="active site" description="Charge relay system" evidence="1">
    <location>
        <position position="169"/>
    </location>
</feature>
<feature type="active site" description="Charge relay system" evidence="1">
    <location>
        <position position="171"/>
    </location>
</feature>
<feature type="binding site" evidence="1">
    <location>
        <begin position="46"/>
        <end position="48"/>
    </location>
    <ligand>
        <name>L-glutamine</name>
        <dbReference type="ChEBI" id="CHEBI:58359"/>
    </ligand>
</feature>
<feature type="binding site" evidence="1">
    <location>
        <position position="106"/>
    </location>
    <ligand>
        <name>L-glutamine</name>
        <dbReference type="ChEBI" id="CHEBI:58359"/>
    </ligand>
</feature>
<feature type="binding site" evidence="1">
    <location>
        <begin position="132"/>
        <end position="133"/>
    </location>
    <ligand>
        <name>L-glutamine</name>
        <dbReference type="ChEBI" id="CHEBI:58359"/>
    </ligand>
</feature>
<accession>Q83GK3</accession>
<dbReference type="EC" id="4.3.3.6" evidence="1"/>
<dbReference type="EC" id="3.5.1.2" evidence="1"/>
<dbReference type="EMBL" id="AE014184">
    <property type="protein sequence ID" value="AAO44362.1"/>
    <property type="molecule type" value="Genomic_DNA"/>
</dbReference>
<dbReference type="RefSeq" id="WP_011102465.1">
    <property type="nucleotide sequence ID" value="NC_004572.3"/>
</dbReference>
<dbReference type="SMR" id="Q83GK3"/>
<dbReference type="STRING" id="203267.TWT_265"/>
<dbReference type="KEGG" id="twh:TWT_265"/>
<dbReference type="eggNOG" id="COG0311">
    <property type="taxonomic scope" value="Bacteria"/>
</dbReference>
<dbReference type="HOGENOM" id="CLU_069674_2_0_11"/>
<dbReference type="OrthoDB" id="9810320at2"/>
<dbReference type="UniPathway" id="UPA00245"/>
<dbReference type="Proteomes" id="UP000002200">
    <property type="component" value="Chromosome"/>
</dbReference>
<dbReference type="GO" id="GO:0005829">
    <property type="term" value="C:cytosol"/>
    <property type="evidence" value="ECO:0007669"/>
    <property type="project" value="TreeGrafter"/>
</dbReference>
<dbReference type="GO" id="GO:1903600">
    <property type="term" value="C:glutaminase complex"/>
    <property type="evidence" value="ECO:0007669"/>
    <property type="project" value="TreeGrafter"/>
</dbReference>
<dbReference type="GO" id="GO:0004359">
    <property type="term" value="F:glutaminase activity"/>
    <property type="evidence" value="ECO:0007669"/>
    <property type="project" value="UniProtKB-UniRule"/>
</dbReference>
<dbReference type="GO" id="GO:0036381">
    <property type="term" value="F:pyridoxal 5'-phosphate synthase (glutamine hydrolysing) activity"/>
    <property type="evidence" value="ECO:0007669"/>
    <property type="project" value="UniProtKB-UniRule"/>
</dbReference>
<dbReference type="GO" id="GO:0006543">
    <property type="term" value="P:glutamine catabolic process"/>
    <property type="evidence" value="ECO:0007669"/>
    <property type="project" value="UniProtKB-UniRule"/>
</dbReference>
<dbReference type="GO" id="GO:0042823">
    <property type="term" value="P:pyridoxal phosphate biosynthetic process"/>
    <property type="evidence" value="ECO:0007669"/>
    <property type="project" value="UniProtKB-UniRule"/>
</dbReference>
<dbReference type="GO" id="GO:0008614">
    <property type="term" value="P:pyridoxine metabolic process"/>
    <property type="evidence" value="ECO:0007669"/>
    <property type="project" value="TreeGrafter"/>
</dbReference>
<dbReference type="CDD" id="cd01749">
    <property type="entry name" value="GATase1_PB"/>
    <property type="match status" value="1"/>
</dbReference>
<dbReference type="FunFam" id="3.40.50.880:FF:000010">
    <property type="entry name" value="uncharacterized protein LOC100176842 isoform X2"/>
    <property type="match status" value="1"/>
</dbReference>
<dbReference type="Gene3D" id="3.40.50.880">
    <property type="match status" value="1"/>
</dbReference>
<dbReference type="HAMAP" id="MF_01615">
    <property type="entry name" value="PdxT"/>
    <property type="match status" value="1"/>
</dbReference>
<dbReference type="InterPro" id="IPR029062">
    <property type="entry name" value="Class_I_gatase-like"/>
</dbReference>
<dbReference type="InterPro" id="IPR002161">
    <property type="entry name" value="PdxT/SNO"/>
</dbReference>
<dbReference type="InterPro" id="IPR021196">
    <property type="entry name" value="PdxT/SNO_CS"/>
</dbReference>
<dbReference type="NCBIfam" id="TIGR03800">
    <property type="entry name" value="PLP_synth_Pdx2"/>
    <property type="match status" value="1"/>
</dbReference>
<dbReference type="PANTHER" id="PTHR31559">
    <property type="entry name" value="PYRIDOXAL 5'-PHOSPHATE SYNTHASE SUBUNIT SNO"/>
    <property type="match status" value="1"/>
</dbReference>
<dbReference type="PANTHER" id="PTHR31559:SF0">
    <property type="entry name" value="PYRIDOXAL 5'-PHOSPHATE SYNTHASE SUBUNIT SNO1-RELATED"/>
    <property type="match status" value="1"/>
</dbReference>
<dbReference type="Pfam" id="PF01174">
    <property type="entry name" value="SNO"/>
    <property type="match status" value="1"/>
</dbReference>
<dbReference type="PIRSF" id="PIRSF005639">
    <property type="entry name" value="Glut_amidoT_SNO"/>
    <property type="match status" value="1"/>
</dbReference>
<dbReference type="SUPFAM" id="SSF52317">
    <property type="entry name" value="Class I glutamine amidotransferase-like"/>
    <property type="match status" value="1"/>
</dbReference>
<dbReference type="PROSITE" id="PS01236">
    <property type="entry name" value="PDXT_SNO_1"/>
    <property type="match status" value="1"/>
</dbReference>
<dbReference type="PROSITE" id="PS51130">
    <property type="entry name" value="PDXT_SNO_2"/>
    <property type="match status" value="1"/>
</dbReference>
<comment type="function">
    <text evidence="1">Catalyzes the hydrolysis of glutamine to glutamate and ammonia as part of the biosynthesis of pyridoxal 5'-phosphate. The resulting ammonia molecule is channeled to the active site of PdxS.</text>
</comment>
<comment type="catalytic activity">
    <reaction evidence="1">
        <text>aldehydo-D-ribose 5-phosphate + D-glyceraldehyde 3-phosphate + L-glutamine = pyridoxal 5'-phosphate + L-glutamate + phosphate + 3 H2O + H(+)</text>
        <dbReference type="Rhea" id="RHEA:31507"/>
        <dbReference type="ChEBI" id="CHEBI:15377"/>
        <dbReference type="ChEBI" id="CHEBI:15378"/>
        <dbReference type="ChEBI" id="CHEBI:29985"/>
        <dbReference type="ChEBI" id="CHEBI:43474"/>
        <dbReference type="ChEBI" id="CHEBI:58273"/>
        <dbReference type="ChEBI" id="CHEBI:58359"/>
        <dbReference type="ChEBI" id="CHEBI:59776"/>
        <dbReference type="ChEBI" id="CHEBI:597326"/>
        <dbReference type="EC" id="4.3.3.6"/>
    </reaction>
</comment>
<comment type="catalytic activity">
    <reaction evidence="1">
        <text>L-glutamine + H2O = L-glutamate + NH4(+)</text>
        <dbReference type="Rhea" id="RHEA:15889"/>
        <dbReference type="ChEBI" id="CHEBI:15377"/>
        <dbReference type="ChEBI" id="CHEBI:28938"/>
        <dbReference type="ChEBI" id="CHEBI:29985"/>
        <dbReference type="ChEBI" id="CHEBI:58359"/>
        <dbReference type="EC" id="3.5.1.2"/>
    </reaction>
</comment>
<comment type="pathway">
    <text evidence="1">Cofactor biosynthesis; pyridoxal 5'-phosphate biosynthesis.</text>
</comment>
<comment type="subunit">
    <text evidence="1">In the presence of PdxS, forms a dodecamer of heterodimers. Only shows activity in the heterodimer.</text>
</comment>
<comment type="similarity">
    <text evidence="1">Belongs to the glutaminase PdxT/SNO family.</text>
</comment>
<protein>
    <recommendedName>
        <fullName evidence="1">Pyridoxal 5'-phosphate synthase subunit PdxT</fullName>
        <ecNumber evidence="1">4.3.3.6</ecNumber>
    </recommendedName>
    <alternativeName>
        <fullName evidence="1">Pdx2</fullName>
    </alternativeName>
    <alternativeName>
        <fullName evidence="1">Pyridoxal 5'-phosphate synthase glutaminase subunit</fullName>
        <ecNumber evidence="1">3.5.1.2</ecNumber>
    </alternativeName>
</protein>
<keyword id="KW-0315">Glutamine amidotransferase</keyword>
<keyword id="KW-0378">Hydrolase</keyword>
<keyword id="KW-0456">Lyase</keyword>
<keyword id="KW-0663">Pyridoxal phosphate</keyword>
<keyword id="KW-1185">Reference proteome</keyword>
<sequence>MTVGVLSLQGSFYEHLFILSRLNTDHIQVKTSEDLSRVTRLIIPGGESTAMLALTQKSGLFDLVRDRIMSGMPVYGTCAGMIMLSTFVEDFPNQKTLSCLDIAVRRNAFGRQINSFESEVSFLNSKITVPFIRAPKITQIGEGVDVLSRLESGDIVAVRQGNVMATAFHPELTGGAAVHEYFLHLGLE</sequence>